<protein>
    <recommendedName>
        <fullName evidence="1">RNA-binding protein Hfq</fullName>
    </recommendedName>
</protein>
<proteinExistence type="inferred from homology"/>
<feature type="chain" id="PRO_0000265195" description="RNA-binding protein Hfq">
    <location>
        <begin position="1"/>
        <end position="79"/>
    </location>
</feature>
<feature type="domain" description="Sm" evidence="2">
    <location>
        <begin position="10"/>
        <end position="70"/>
    </location>
</feature>
<reference key="1">
    <citation type="submission" date="2006-05" db="EMBL/GenBank/DDBJ databases">
        <title>Complete sequence of chromosome of Silicibacter sp. TM1040.</title>
        <authorList>
            <consortium name="US DOE Joint Genome Institute"/>
            <person name="Copeland A."/>
            <person name="Lucas S."/>
            <person name="Lapidus A."/>
            <person name="Barry K."/>
            <person name="Detter J.C."/>
            <person name="Glavina del Rio T."/>
            <person name="Hammon N."/>
            <person name="Israni S."/>
            <person name="Dalin E."/>
            <person name="Tice H."/>
            <person name="Pitluck S."/>
            <person name="Brettin T."/>
            <person name="Bruce D."/>
            <person name="Han C."/>
            <person name="Tapia R."/>
            <person name="Goodwin L."/>
            <person name="Thompson L.S."/>
            <person name="Gilna P."/>
            <person name="Schmutz J."/>
            <person name="Larimer F."/>
            <person name="Land M."/>
            <person name="Hauser L."/>
            <person name="Kyrpides N."/>
            <person name="Kim E."/>
            <person name="Belas R."/>
            <person name="Moran M.A."/>
            <person name="Buchan A."/>
            <person name="Gonzalez J.M."/>
            <person name="Schell M.A."/>
            <person name="Sun F."/>
            <person name="Richardson P."/>
        </authorList>
    </citation>
    <scope>NUCLEOTIDE SEQUENCE [LARGE SCALE GENOMIC DNA]</scope>
    <source>
        <strain>TM1040</strain>
    </source>
</reference>
<keyword id="KW-1185">Reference proteome</keyword>
<keyword id="KW-0694">RNA-binding</keyword>
<keyword id="KW-0346">Stress response</keyword>
<dbReference type="EMBL" id="CP000377">
    <property type="protein sequence ID" value="ABF64089.1"/>
    <property type="molecule type" value="Genomic_DNA"/>
</dbReference>
<dbReference type="RefSeq" id="WP_005611588.1">
    <property type="nucleotide sequence ID" value="NC_008044.1"/>
</dbReference>
<dbReference type="SMR" id="Q1GGX7"/>
<dbReference type="STRING" id="292414.TM1040_1356"/>
<dbReference type="GeneID" id="28249524"/>
<dbReference type="KEGG" id="sit:TM1040_1356"/>
<dbReference type="eggNOG" id="COG1923">
    <property type="taxonomic scope" value="Bacteria"/>
</dbReference>
<dbReference type="HOGENOM" id="CLU_113688_0_0_5"/>
<dbReference type="OrthoDB" id="9799751at2"/>
<dbReference type="Proteomes" id="UP000000636">
    <property type="component" value="Chromosome"/>
</dbReference>
<dbReference type="GO" id="GO:0005829">
    <property type="term" value="C:cytosol"/>
    <property type="evidence" value="ECO:0007669"/>
    <property type="project" value="TreeGrafter"/>
</dbReference>
<dbReference type="GO" id="GO:0003723">
    <property type="term" value="F:RNA binding"/>
    <property type="evidence" value="ECO:0007669"/>
    <property type="project" value="UniProtKB-UniRule"/>
</dbReference>
<dbReference type="GO" id="GO:0006355">
    <property type="term" value="P:regulation of DNA-templated transcription"/>
    <property type="evidence" value="ECO:0007669"/>
    <property type="project" value="InterPro"/>
</dbReference>
<dbReference type="GO" id="GO:0043487">
    <property type="term" value="P:regulation of RNA stability"/>
    <property type="evidence" value="ECO:0007669"/>
    <property type="project" value="TreeGrafter"/>
</dbReference>
<dbReference type="GO" id="GO:0045974">
    <property type="term" value="P:regulation of translation, ncRNA-mediated"/>
    <property type="evidence" value="ECO:0007669"/>
    <property type="project" value="TreeGrafter"/>
</dbReference>
<dbReference type="CDD" id="cd01716">
    <property type="entry name" value="Hfq"/>
    <property type="match status" value="1"/>
</dbReference>
<dbReference type="FunFam" id="2.30.30.100:FF:000001">
    <property type="entry name" value="RNA-binding protein Hfq"/>
    <property type="match status" value="1"/>
</dbReference>
<dbReference type="Gene3D" id="2.30.30.100">
    <property type="match status" value="1"/>
</dbReference>
<dbReference type="HAMAP" id="MF_00436">
    <property type="entry name" value="Hfq"/>
    <property type="match status" value="1"/>
</dbReference>
<dbReference type="InterPro" id="IPR005001">
    <property type="entry name" value="Hfq"/>
</dbReference>
<dbReference type="InterPro" id="IPR010920">
    <property type="entry name" value="LSM_dom_sf"/>
</dbReference>
<dbReference type="InterPro" id="IPR047575">
    <property type="entry name" value="Sm"/>
</dbReference>
<dbReference type="NCBIfam" id="TIGR02383">
    <property type="entry name" value="Hfq"/>
    <property type="match status" value="1"/>
</dbReference>
<dbReference type="NCBIfam" id="NF001602">
    <property type="entry name" value="PRK00395.1"/>
    <property type="match status" value="1"/>
</dbReference>
<dbReference type="PANTHER" id="PTHR34772">
    <property type="entry name" value="RNA-BINDING PROTEIN HFQ"/>
    <property type="match status" value="1"/>
</dbReference>
<dbReference type="PANTHER" id="PTHR34772:SF1">
    <property type="entry name" value="RNA-BINDING PROTEIN HFQ"/>
    <property type="match status" value="1"/>
</dbReference>
<dbReference type="Pfam" id="PF17209">
    <property type="entry name" value="Hfq"/>
    <property type="match status" value="1"/>
</dbReference>
<dbReference type="SUPFAM" id="SSF50182">
    <property type="entry name" value="Sm-like ribonucleoproteins"/>
    <property type="match status" value="1"/>
</dbReference>
<dbReference type="PROSITE" id="PS52002">
    <property type="entry name" value="SM"/>
    <property type="match status" value="1"/>
</dbReference>
<evidence type="ECO:0000255" key="1">
    <source>
        <dbReference type="HAMAP-Rule" id="MF_00436"/>
    </source>
</evidence>
<evidence type="ECO:0000255" key="2">
    <source>
        <dbReference type="PROSITE-ProRule" id="PRU01346"/>
    </source>
</evidence>
<comment type="function">
    <text evidence="1">RNA chaperone that binds small regulatory RNA (sRNAs) and mRNAs to facilitate mRNA translational regulation in response to envelope stress, environmental stress and changes in metabolite concentrations. Also binds with high specificity to tRNAs.</text>
</comment>
<comment type="subunit">
    <text evidence="1">Homohexamer.</text>
</comment>
<comment type="similarity">
    <text evidence="1">Belongs to the Hfq family.</text>
</comment>
<gene>
    <name evidence="1" type="primary">hfq</name>
    <name type="ordered locus">TM1040_1356</name>
</gene>
<organism>
    <name type="scientific">Ruegeria sp. (strain TM1040)</name>
    <name type="common">Silicibacter sp.</name>
    <dbReference type="NCBI Taxonomy" id="292414"/>
    <lineage>
        <taxon>Bacteria</taxon>
        <taxon>Pseudomonadati</taxon>
        <taxon>Pseudomonadota</taxon>
        <taxon>Alphaproteobacteria</taxon>
        <taxon>Rhodobacterales</taxon>
        <taxon>Roseobacteraceae</taxon>
        <taxon>Ruegeria</taxon>
    </lineage>
</organism>
<name>HFQ_RUEST</name>
<accession>Q1GGX7</accession>
<sequence length="79" mass="8991">MASDRQNLQDAFLNHVRKTKVPVTIFLINGVKLQGVITWFDNFCVLLRRDGQSQLVYKHAISTIMPAQPISLYEGEDSN</sequence>